<feature type="signal peptide" evidence="2">
    <location>
        <begin position="1"/>
        <end position="24"/>
    </location>
</feature>
<feature type="chain" id="PRO_0000429482" description="Probable major fimbrial subunit LpfA">
    <location>
        <begin position="25"/>
        <end position="178"/>
    </location>
</feature>
<comment type="function">
    <text evidence="3">Part of the lpfABCC'DE fimbrial operon. LP fimbriae may participate in the interaction with eukaryotic cells by assisting in microcolony formation.</text>
</comment>
<comment type="subcellular location">
    <subcellularLocation>
        <location evidence="1">Fimbrium</location>
    </subcellularLocation>
</comment>
<comment type="induction">
    <text evidence="3">Induced during the exponential growth phase.</text>
</comment>
<comment type="similarity">
    <text evidence="4">Belongs to the fimbrial protein family.</text>
</comment>
<comment type="sequence caution" evidence="4">
    <conflict type="erroneous initiation">
        <sequence resource="EMBL-CDS" id="BAB37854"/>
    </conflict>
    <text>Truncated N-terminus.</text>
</comment>
<proteinExistence type="evidence at transcript level"/>
<dbReference type="EMBL" id="AE005174">
    <property type="protein sequence ID" value="AAG58695.1"/>
    <property type="molecule type" value="Genomic_DNA"/>
</dbReference>
<dbReference type="EMBL" id="BA000007">
    <property type="protein sequence ID" value="BAB37854.2"/>
    <property type="status" value="ALT_INIT"/>
    <property type="molecule type" value="Genomic_DNA"/>
</dbReference>
<dbReference type="PIR" id="C86029">
    <property type="entry name" value="C86029"/>
</dbReference>
<dbReference type="PIR" id="G91182">
    <property type="entry name" value="G91182"/>
</dbReference>
<dbReference type="RefSeq" id="NP_312458.1">
    <property type="nucleotide sequence ID" value="NC_002695.1"/>
</dbReference>
<dbReference type="SMR" id="Q8X5K5"/>
<dbReference type="STRING" id="155864.Z4971"/>
<dbReference type="KEGG" id="ece:Z4971"/>
<dbReference type="KEGG" id="ecs:ECs_4431"/>
<dbReference type="PATRIC" id="fig|386585.9.peg.4638"/>
<dbReference type="eggNOG" id="COG3539">
    <property type="taxonomic scope" value="Bacteria"/>
</dbReference>
<dbReference type="HOGENOM" id="CLU_088965_0_0_6"/>
<dbReference type="Proteomes" id="UP000000558">
    <property type="component" value="Chromosome"/>
</dbReference>
<dbReference type="Proteomes" id="UP000002519">
    <property type="component" value="Chromosome"/>
</dbReference>
<dbReference type="GO" id="GO:0009289">
    <property type="term" value="C:pilus"/>
    <property type="evidence" value="ECO:0007669"/>
    <property type="project" value="UniProtKB-SubCell"/>
</dbReference>
<dbReference type="GO" id="GO:0043709">
    <property type="term" value="P:cell adhesion involved in single-species biofilm formation"/>
    <property type="evidence" value="ECO:0007669"/>
    <property type="project" value="TreeGrafter"/>
</dbReference>
<dbReference type="Gene3D" id="2.60.40.1090">
    <property type="entry name" value="Fimbrial-type adhesion domain"/>
    <property type="match status" value="1"/>
</dbReference>
<dbReference type="InterPro" id="IPR000259">
    <property type="entry name" value="Adhesion_dom_fimbrial"/>
</dbReference>
<dbReference type="InterPro" id="IPR036937">
    <property type="entry name" value="Adhesion_dom_fimbrial_sf"/>
</dbReference>
<dbReference type="InterPro" id="IPR008966">
    <property type="entry name" value="Adhesion_dom_sf"/>
</dbReference>
<dbReference type="InterPro" id="IPR050263">
    <property type="entry name" value="Bact_Fimbrial_Adh_Pro"/>
</dbReference>
<dbReference type="NCBIfam" id="NF011756">
    <property type="entry name" value="PRK15209.1"/>
    <property type="match status" value="1"/>
</dbReference>
<dbReference type="PANTHER" id="PTHR33420">
    <property type="entry name" value="FIMBRIAL SUBUNIT ELFA-RELATED"/>
    <property type="match status" value="1"/>
</dbReference>
<dbReference type="PANTHER" id="PTHR33420:SF12">
    <property type="entry name" value="FIMBRIN-LIKE PROTEIN FIMI-RELATED"/>
    <property type="match status" value="1"/>
</dbReference>
<dbReference type="Pfam" id="PF00419">
    <property type="entry name" value="Fimbrial"/>
    <property type="match status" value="1"/>
</dbReference>
<dbReference type="SUPFAM" id="SSF49401">
    <property type="entry name" value="Bacterial adhesins"/>
    <property type="match status" value="1"/>
</dbReference>
<keyword id="KW-0281">Fimbrium</keyword>
<keyword id="KW-1185">Reference proteome</keyword>
<keyword id="KW-0732">Signal</keyword>
<name>LPFA_ECO57</name>
<accession>Q8X5K5</accession>
<accession>Q7A9Y5</accession>
<reference key="1">
    <citation type="journal article" date="2001" name="DNA Res.">
        <title>Complete genome sequence of enterohemorrhagic Escherichia coli O157:H7 and genomic comparison with a laboratory strain K-12.</title>
        <authorList>
            <person name="Hayashi T."/>
            <person name="Makino K."/>
            <person name="Ohnishi M."/>
            <person name="Kurokawa K."/>
            <person name="Ishii K."/>
            <person name="Yokoyama K."/>
            <person name="Han C.-G."/>
            <person name="Ohtsubo E."/>
            <person name="Nakayama K."/>
            <person name="Murata T."/>
            <person name="Tanaka M."/>
            <person name="Tobe T."/>
            <person name="Iida T."/>
            <person name="Takami H."/>
            <person name="Honda T."/>
            <person name="Sasakawa C."/>
            <person name="Ogasawara N."/>
            <person name="Yasunaga T."/>
            <person name="Kuhara S."/>
            <person name="Shiba T."/>
            <person name="Hattori M."/>
            <person name="Shinagawa H."/>
        </authorList>
    </citation>
    <scope>NUCLEOTIDE SEQUENCE [LARGE SCALE GENOMIC DNA]</scope>
    <source>
        <strain>O157:H7 / Sakai / RIMD 0509952 / EHEC</strain>
    </source>
</reference>
<reference key="2">
    <citation type="journal article" date="2001" name="Nature">
        <title>Genome sequence of enterohaemorrhagic Escherichia coli O157:H7.</title>
        <authorList>
            <person name="Perna N.T."/>
            <person name="Plunkett G. III"/>
            <person name="Burland V."/>
            <person name="Mau B."/>
            <person name="Glasner J.D."/>
            <person name="Rose D.J."/>
            <person name="Mayhew G.F."/>
            <person name="Evans P.S."/>
            <person name="Gregor J."/>
            <person name="Kirkpatrick H.A."/>
            <person name="Posfai G."/>
            <person name="Hackett J."/>
            <person name="Klink S."/>
            <person name="Boutin A."/>
            <person name="Shao Y."/>
            <person name="Miller L."/>
            <person name="Grotbeck E.J."/>
            <person name="Davis N.W."/>
            <person name="Lim A."/>
            <person name="Dimalanta E.T."/>
            <person name="Potamousis K."/>
            <person name="Apodaca J."/>
            <person name="Anantharaman T.S."/>
            <person name="Lin J."/>
            <person name="Yen G."/>
            <person name="Schwartz D.C."/>
            <person name="Welch R.A."/>
            <person name="Blattner F.R."/>
        </authorList>
    </citation>
    <scope>NUCLEOTIDE SEQUENCE [LARGE SCALE GENOMIC DNA]</scope>
    <source>
        <strain>O157:H7 / EDL933 / ATCC 700927 / EHEC</strain>
    </source>
</reference>
<reference key="3">
    <citation type="journal article" date="2002" name="Infect. Immun.">
        <title>Identification and characterization of lpfABCC'DE, a fimbrial operon of enterohemorrhagic Escherichia coli O157:H7.</title>
        <authorList>
            <person name="Torres A.G."/>
            <person name="Giron J.A."/>
            <person name="Perna N.T."/>
            <person name="Burland V."/>
            <person name="Blattner F.R."/>
            <person name="Avelino-Flores F."/>
            <person name="Kaper J.B."/>
        </authorList>
    </citation>
    <scope>FUNCTION</scope>
    <scope>INDUCTION</scope>
    <scope>GENE NAME</scope>
    <source>
        <strain>O157:H7 / EDL933 / ATCC 700927 / EHEC</strain>
    </source>
</reference>
<evidence type="ECO:0000250" key="1"/>
<evidence type="ECO:0000255" key="2"/>
<evidence type="ECO:0000269" key="3">
    <source>
    </source>
</evidence>
<evidence type="ECO:0000305" key="4"/>
<organism>
    <name type="scientific">Escherichia coli O157:H7</name>
    <dbReference type="NCBI Taxonomy" id="83334"/>
    <lineage>
        <taxon>Bacteria</taxon>
        <taxon>Pseudomonadati</taxon>
        <taxon>Pseudomonadota</taxon>
        <taxon>Gammaproteobacteria</taxon>
        <taxon>Enterobacterales</taxon>
        <taxon>Enterobacteriaceae</taxon>
        <taxon>Escherichia</taxon>
    </lineage>
</organism>
<gene>
    <name type="primary">lpfA</name>
    <name type="ordered locus">Z4971</name>
    <name type="ordered locus">ECs4431</name>
</gene>
<sequence>MEFFMKKVVFALTALALTSGTVFAAESGDGTVKFTGEIVDSPCVLSVDSQNQEVVLGQVQKSVFAAVGDKSPAKPFEIKLEDCDTTTMKKANVSFSGVGDADKSDLISVSTEAGAAKGVGIGIYDNSNTLVALNGGKASVDLSKGQTVLYFTANYVSTLATVTTGYGNAQVDFNLSYE</sequence>
<protein>
    <recommendedName>
        <fullName>Probable major fimbrial subunit LpfA</fullName>
    </recommendedName>
</protein>